<reference key="1">
    <citation type="journal article" date="2008" name="J. Mol. Evol.">
        <title>Extensive rearrangements in the chloroplast genome of Trachelium caeruleum are associated with repeats and tRNA genes.</title>
        <authorList>
            <person name="Haberle R.C."/>
            <person name="Fourcade H.M."/>
            <person name="Boore J.L."/>
            <person name="Jansen R.K."/>
        </authorList>
    </citation>
    <scope>NUCLEOTIDE SEQUENCE [LARGE SCALE GENOMIC DNA]</scope>
</reference>
<organism>
    <name type="scientific">Trachelium caeruleum</name>
    <name type="common">Blue throatwort</name>
    <dbReference type="NCBI Taxonomy" id="28494"/>
    <lineage>
        <taxon>Eukaryota</taxon>
        <taxon>Viridiplantae</taxon>
        <taxon>Streptophyta</taxon>
        <taxon>Embryophyta</taxon>
        <taxon>Tracheophyta</taxon>
        <taxon>Spermatophyta</taxon>
        <taxon>Magnoliopsida</taxon>
        <taxon>eudicotyledons</taxon>
        <taxon>Gunneridae</taxon>
        <taxon>Pentapetalae</taxon>
        <taxon>asterids</taxon>
        <taxon>campanulids</taxon>
        <taxon>Asterales</taxon>
        <taxon>Campanulaceae</taxon>
        <taxon>Trachelium</taxon>
    </lineage>
</organism>
<name>PSBC_TRACE</name>
<proteinExistence type="inferred from homology"/>
<gene>
    <name evidence="1" type="primary">psbC</name>
</gene>
<feature type="propeptide" id="PRO_0000431214" evidence="1">
    <location>
        <begin position="1"/>
        <end position="2"/>
    </location>
</feature>
<feature type="chain" id="PRO_0000361504" description="Photosystem II CP43 reaction center protein" evidence="1">
    <location>
        <begin position="3"/>
        <end position="461"/>
    </location>
</feature>
<feature type="transmembrane region" description="Helical" evidence="1">
    <location>
        <begin position="57"/>
        <end position="81"/>
    </location>
</feature>
<feature type="transmembrane region" description="Helical" evidence="1">
    <location>
        <begin position="122"/>
        <end position="143"/>
    </location>
</feature>
<feature type="transmembrane region" description="Helical" evidence="1">
    <location>
        <begin position="166"/>
        <end position="188"/>
    </location>
</feature>
<feature type="transmembrane region" description="Helical" evidence="1">
    <location>
        <begin position="243"/>
        <end position="263"/>
    </location>
</feature>
<feature type="transmembrane region" description="Helical" evidence="1">
    <location>
        <begin position="279"/>
        <end position="300"/>
    </location>
</feature>
<feature type="transmembrane region" description="Helical" evidence="1">
    <location>
        <begin position="435"/>
        <end position="459"/>
    </location>
</feature>
<feature type="binding site" evidence="1">
    <location>
        <position position="355"/>
    </location>
    <ligand>
        <name>[CaMn4O5] cluster</name>
        <dbReference type="ChEBI" id="CHEBI:189552"/>
    </ligand>
</feature>
<feature type="modified residue" description="N-acetylthreonine" evidence="1">
    <location>
        <position position="3"/>
    </location>
</feature>
<feature type="modified residue" description="Phosphothreonine" evidence="1">
    <location>
        <position position="3"/>
    </location>
</feature>
<keyword id="KW-0007">Acetylation</keyword>
<keyword id="KW-0148">Chlorophyll</keyword>
<keyword id="KW-0150">Chloroplast</keyword>
<keyword id="KW-0157">Chromophore</keyword>
<keyword id="KW-0464">Manganese</keyword>
<keyword id="KW-0472">Membrane</keyword>
<keyword id="KW-0479">Metal-binding</keyword>
<keyword id="KW-0597">Phosphoprotein</keyword>
<keyword id="KW-0602">Photosynthesis</keyword>
<keyword id="KW-0604">Photosystem II</keyword>
<keyword id="KW-0934">Plastid</keyword>
<keyword id="KW-0793">Thylakoid</keyword>
<keyword id="KW-0812">Transmembrane</keyword>
<keyword id="KW-1133">Transmembrane helix</keyword>
<comment type="function">
    <text evidence="1">One of the components of the core complex of photosystem II (PSII). It binds chlorophyll and helps catalyze the primary light-induced photochemical processes of PSII. PSII is a light-driven water:plastoquinone oxidoreductase, using light energy to abstract electrons from H(2)O, generating O(2) and a proton gradient subsequently used for ATP formation.</text>
</comment>
<comment type="cofactor">
    <text evidence="1">Binds multiple chlorophylls and provides some of the ligands for the Ca-4Mn-5O cluster of the oxygen-evolving complex. It may also provide a ligand for a Cl- that is required for oxygen evolution. PSII binds additional chlorophylls, carotenoids and specific lipids.</text>
</comment>
<comment type="subunit">
    <text evidence="1">PSII is composed of 1 copy each of membrane proteins PsbA, PsbB, PsbC, PsbD, PsbE, PsbF, PsbH, PsbI, PsbJ, PsbK, PsbL, PsbM, PsbT, PsbX, PsbY, PsbZ, Psb30/Ycf12, at least 3 peripheral proteins of the oxygen-evolving complex and a large number of cofactors. It forms dimeric complexes.</text>
</comment>
<comment type="subcellular location">
    <subcellularLocation>
        <location evidence="1">Plastid</location>
        <location evidence="1">Chloroplast thylakoid membrane</location>
        <topology evidence="1">Multi-pass membrane protein</topology>
    </subcellularLocation>
</comment>
<comment type="similarity">
    <text evidence="1">Belongs to the PsbB/PsbC family. PsbC subfamily.</text>
</comment>
<dbReference type="EMBL" id="EU090187">
    <property type="protein sequence ID" value="ABV26504.1"/>
    <property type="molecule type" value="Genomic_DNA"/>
</dbReference>
<dbReference type="RefSeq" id="YP_001718679.1">
    <property type="nucleotide sequence ID" value="NC_010442.1"/>
</dbReference>
<dbReference type="SMR" id="B1NTP4"/>
<dbReference type="GeneID" id="6155886"/>
<dbReference type="GO" id="GO:0009535">
    <property type="term" value="C:chloroplast thylakoid membrane"/>
    <property type="evidence" value="ECO:0007669"/>
    <property type="project" value="UniProtKB-SubCell"/>
</dbReference>
<dbReference type="GO" id="GO:0009523">
    <property type="term" value="C:photosystem II"/>
    <property type="evidence" value="ECO:0007669"/>
    <property type="project" value="UniProtKB-KW"/>
</dbReference>
<dbReference type="GO" id="GO:0016168">
    <property type="term" value="F:chlorophyll binding"/>
    <property type="evidence" value="ECO:0007669"/>
    <property type="project" value="UniProtKB-UniRule"/>
</dbReference>
<dbReference type="GO" id="GO:0045156">
    <property type="term" value="F:electron transporter, transferring electrons within the cyclic electron transport pathway of photosynthesis activity"/>
    <property type="evidence" value="ECO:0007669"/>
    <property type="project" value="InterPro"/>
</dbReference>
<dbReference type="GO" id="GO:0046872">
    <property type="term" value="F:metal ion binding"/>
    <property type="evidence" value="ECO:0007669"/>
    <property type="project" value="UniProtKB-KW"/>
</dbReference>
<dbReference type="GO" id="GO:0009772">
    <property type="term" value="P:photosynthetic electron transport in photosystem II"/>
    <property type="evidence" value="ECO:0007669"/>
    <property type="project" value="InterPro"/>
</dbReference>
<dbReference type="FunFam" id="1.10.10.670:FF:000001">
    <property type="entry name" value="Photosystem II CP43 reaction center protein"/>
    <property type="match status" value="1"/>
</dbReference>
<dbReference type="Gene3D" id="1.10.10.670">
    <property type="entry name" value="photosystem ii from thermosynechococcus elongatus"/>
    <property type="match status" value="1"/>
</dbReference>
<dbReference type="HAMAP" id="MF_01496">
    <property type="entry name" value="PSII_PsbC_CP43"/>
    <property type="match status" value="1"/>
</dbReference>
<dbReference type="InterPro" id="IPR000932">
    <property type="entry name" value="PS_antenna-like"/>
</dbReference>
<dbReference type="InterPro" id="IPR036001">
    <property type="entry name" value="PS_II_antenna-like_sf"/>
</dbReference>
<dbReference type="InterPro" id="IPR005869">
    <property type="entry name" value="PSII_PsbC"/>
</dbReference>
<dbReference type="InterPro" id="IPR044900">
    <property type="entry name" value="PSII_PsbC_sf"/>
</dbReference>
<dbReference type="NCBIfam" id="TIGR01153">
    <property type="entry name" value="psbC"/>
    <property type="match status" value="1"/>
</dbReference>
<dbReference type="Pfam" id="PF00421">
    <property type="entry name" value="PSII"/>
    <property type="match status" value="1"/>
</dbReference>
<dbReference type="SUPFAM" id="SSF161077">
    <property type="entry name" value="Photosystem II antenna protein-like"/>
    <property type="match status" value="1"/>
</dbReference>
<evidence type="ECO:0000255" key="1">
    <source>
        <dbReference type="HAMAP-Rule" id="MF_01496"/>
    </source>
</evidence>
<accession>B1NTP4</accession>
<sequence>METLFNGTLALVGRDQESTGFAWWAGNARLINLSGKLLGAHVAHAGLIVFWAGAMNLFEVAHFVPEKPMYEQGLILLPHLATLGWGVGPGGEVLDTFPYFVSGVLHLISSAVLGFGGIYHALLGPETLEESFPFFGYVWKDRNKMTTILGIHLILLGIGAFLLVFKALYFGGVYDTWAPGGGDVRKISNLTLSPSILFGYLLKSPFGGEGWIVSVDDLEDIIGGHVWLGSICIFGGIWHILTKPFAWARRALVWSGEAYLSYSLAAISVFGFIACCFVWFNNTAYPSEFYGPTGPEASQAQAFTFLVRDQRLGANVGSAQGPTGLGKYLMRSPTGEVIFGGETMRFWDLRAPWLEPLRGPNGLDLSRLKKDIQPWQERRSAEYMTHAPLGSLNSVGGVATEINAVNYVSPRSWLATSHFVLGFFFFVGHLWHAGRARAAAAGFEKGIDRDFEPVLSMTPLN</sequence>
<geneLocation type="chloroplast"/>
<protein>
    <recommendedName>
        <fullName evidence="1">Photosystem II CP43 reaction center protein</fullName>
    </recommendedName>
    <alternativeName>
        <fullName evidence="1">PSII 43 kDa protein</fullName>
    </alternativeName>
    <alternativeName>
        <fullName evidence="1">Protein CP-43</fullName>
    </alternativeName>
</protein>